<feature type="chain" id="PRO_1000088552" description="Isoleucine--tRNA ligase">
    <location>
        <begin position="1"/>
        <end position="943"/>
    </location>
</feature>
<feature type="short sequence motif" description="'HIGH' region">
    <location>
        <begin position="58"/>
        <end position="68"/>
    </location>
</feature>
<feature type="short sequence motif" description="'KMSKS' region">
    <location>
        <begin position="608"/>
        <end position="612"/>
    </location>
</feature>
<feature type="binding site" evidence="1">
    <location>
        <position position="567"/>
    </location>
    <ligand>
        <name>L-isoleucyl-5'-AMP</name>
        <dbReference type="ChEBI" id="CHEBI:178002"/>
    </ligand>
</feature>
<feature type="binding site" evidence="1">
    <location>
        <position position="611"/>
    </location>
    <ligand>
        <name>ATP</name>
        <dbReference type="ChEBI" id="CHEBI:30616"/>
    </ligand>
</feature>
<feature type="binding site" evidence="1">
    <location>
        <position position="906"/>
    </location>
    <ligand>
        <name>Zn(2+)</name>
        <dbReference type="ChEBI" id="CHEBI:29105"/>
    </ligand>
</feature>
<feature type="binding site" evidence="1">
    <location>
        <position position="909"/>
    </location>
    <ligand>
        <name>Zn(2+)</name>
        <dbReference type="ChEBI" id="CHEBI:29105"/>
    </ligand>
</feature>
<feature type="binding site" evidence="1">
    <location>
        <position position="926"/>
    </location>
    <ligand>
        <name>Zn(2+)</name>
        <dbReference type="ChEBI" id="CHEBI:29105"/>
    </ligand>
</feature>
<feature type="binding site" evidence="1">
    <location>
        <position position="929"/>
    </location>
    <ligand>
        <name>Zn(2+)</name>
        <dbReference type="ChEBI" id="CHEBI:29105"/>
    </ligand>
</feature>
<name>SYI_PSEPG</name>
<reference key="1">
    <citation type="submission" date="2008-01" db="EMBL/GenBank/DDBJ databases">
        <title>Complete sequence of Pseudomonas putida GB-1.</title>
        <authorList>
            <consortium name="US DOE Joint Genome Institute"/>
            <person name="Copeland A."/>
            <person name="Lucas S."/>
            <person name="Lapidus A."/>
            <person name="Barry K."/>
            <person name="Glavina del Rio T."/>
            <person name="Dalin E."/>
            <person name="Tice H."/>
            <person name="Pitluck S."/>
            <person name="Bruce D."/>
            <person name="Goodwin L."/>
            <person name="Chertkov O."/>
            <person name="Brettin T."/>
            <person name="Detter J.C."/>
            <person name="Han C."/>
            <person name="Kuske C.R."/>
            <person name="Schmutz J."/>
            <person name="Larimer F."/>
            <person name="Land M."/>
            <person name="Hauser L."/>
            <person name="Kyrpides N."/>
            <person name="Kim E."/>
            <person name="McCarthy J.K."/>
            <person name="Richardson P."/>
        </authorList>
    </citation>
    <scope>NUCLEOTIDE SEQUENCE [LARGE SCALE GENOMIC DNA]</scope>
    <source>
        <strain>GB-1</strain>
    </source>
</reference>
<proteinExistence type="inferred from homology"/>
<dbReference type="EC" id="6.1.1.5" evidence="1"/>
<dbReference type="EMBL" id="CP000926">
    <property type="protein sequence ID" value="ABY96560.1"/>
    <property type="molecule type" value="Genomic_DNA"/>
</dbReference>
<dbReference type="RefSeq" id="WP_012270369.1">
    <property type="nucleotide sequence ID" value="NC_010322.1"/>
</dbReference>
<dbReference type="SMR" id="B0KM84"/>
<dbReference type="KEGG" id="ppg:PputGB1_0649"/>
<dbReference type="eggNOG" id="COG0060">
    <property type="taxonomic scope" value="Bacteria"/>
</dbReference>
<dbReference type="HOGENOM" id="CLU_001493_7_1_6"/>
<dbReference type="Proteomes" id="UP000002157">
    <property type="component" value="Chromosome"/>
</dbReference>
<dbReference type="GO" id="GO:0005829">
    <property type="term" value="C:cytosol"/>
    <property type="evidence" value="ECO:0007669"/>
    <property type="project" value="TreeGrafter"/>
</dbReference>
<dbReference type="GO" id="GO:0002161">
    <property type="term" value="F:aminoacyl-tRNA deacylase activity"/>
    <property type="evidence" value="ECO:0007669"/>
    <property type="project" value="InterPro"/>
</dbReference>
<dbReference type="GO" id="GO:0005524">
    <property type="term" value="F:ATP binding"/>
    <property type="evidence" value="ECO:0007669"/>
    <property type="project" value="UniProtKB-UniRule"/>
</dbReference>
<dbReference type="GO" id="GO:0004822">
    <property type="term" value="F:isoleucine-tRNA ligase activity"/>
    <property type="evidence" value="ECO:0007669"/>
    <property type="project" value="UniProtKB-UniRule"/>
</dbReference>
<dbReference type="GO" id="GO:0000049">
    <property type="term" value="F:tRNA binding"/>
    <property type="evidence" value="ECO:0007669"/>
    <property type="project" value="InterPro"/>
</dbReference>
<dbReference type="GO" id="GO:0008270">
    <property type="term" value="F:zinc ion binding"/>
    <property type="evidence" value="ECO:0007669"/>
    <property type="project" value="UniProtKB-UniRule"/>
</dbReference>
<dbReference type="GO" id="GO:0006428">
    <property type="term" value="P:isoleucyl-tRNA aminoacylation"/>
    <property type="evidence" value="ECO:0007669"/>
    <property type="project" value="UniProtKB-UniRule"/>
</dbReference>
<dbReference type="CDD" id="cd07960">
    <property type="entry name" value="Anticodon_Ia_Ile_BEm"/>
    <property type="match status" value="1"/>
</dbReference>
<dbReference type="CDD" id="cd00818">
    <property type="entry name" value="IleRS_core"/>
    <property type="match status" value="1"/>
</dbReference>
<dbReference type="FunFam" id="1.10.730.20:FF:000001">
    <property type="entry name" value="Isoleucine--tRNA ligase"/>
    <property type="match status" value="1"/>
</dbReference>
<dbReference type="FunFam" id="3.40.50.620:FF:000042">
    <property type="entry name" value="Isoleucine--tRNA ligase"/>
    <property type="match status" value="1"/>
</dbReference>
<dbReference type="FunFam" id="3.40.50.620:FF:000048">
    <property type="entry name" value="Isoleucine--tRNA ligase"/>
    <property type="match status" value="1"/>
</dbReference>
<dbReference type="Gene3D" id="1.10.730.20">
    <property type="match status" value="1"/>
</dbReference>
<dbReference type="Gene3D" id="3.40.50.620">
    <property type="entry name" value="HUPs"/>
    <property type="match status" value="2"/>
</dbReference>
<dbReference type="Gene3D" id="3.90.740.10">
    <property type="entry name" value="Valyl/Leucyl/Isoleucyl-tRNA synthetase, editing domain"/>
    <property type="match status" value="1"/>
</dbReference>
<dbReference type="HAMAP" id="MF_02002">
    <property type="entry name" value="Ile_tRNA_synth_type1"/>
    <property type="match status" value="1"/>
</dbReference>
<dbReference type="InterPro" id="IPR001412">
    <property type="entry name" value="aa-tRNA-synth_I_CS"/>
</dbReference>
<dbReference type="InterPro" id="IPR002300">
    <property type="entry name" value="aa-tRNA-synth_Ia"/>
</dbReference>
<dbReference type="InterPro" id="IPR033708">
    <property type="entry name" value="Anticodon_Ile_BEm"/>
</dbReference>
<dbReference type="InterPro" id="IPR002301">
    <property type="entry name" value="Ile-tRNA-ligase"/>
</dbReference>
<dbReference type="InterPro" id="IPR023585">
    <property type="entry name" value="Ile-tRNA-ligase_type1"/>
</dbReference>
<dbReference type="InterPro" id="IPR050081">
    <property type="entry name" value="Ile-tRNA_ligase"/>
</dbReference>
<dbReference type="InterPro" id="IPR013155">
    <property type="entry name" value="M/V/L/I-tRNA-synth_anticd-bd"/>
</dbReference>
<dbReference type="InterPro" id="IPR014729">
    <property type="entry name" value="Rossmann-like_a/b/a_fold"/>
</dbReference>
<dbReference type="InterPro" id="IPR009080">
    <property type="entry name" value="tRNAsynth_Ia_anticodon-bd"/>
</dbReference>
<dbReference type="InterPro" id="IPR009008">
    <property type="entry name" value="Val/Leu/Ile-tRNA-synth_edit"/>
</dbReference>
<dbReference type="InterPro" id="IPR010663">
    <property type="entry name" value="Znf_FPG/IleRS"/>
</dbReference>
<dbReference type="NCBIfam" id="TIGR00392">
    <property type="entry name" value="ileS"/>
    <property type="match status" value="1"/>
</dbReference>
<dbReference type="PANTHER" id="PTHR42765:SF1">
    <property type="entry name" value="ISOLEUCINE--TRNA LIGASE, MITOCHONDRIAL"/>
    <property type="match status" value="1"/>
</dbReference>
<dbReference type="PANTHER" id="PTHR42765">
    <property type="entry name" value="SOLEUCYL-TRNA SYNTHETASE"/>
    <property type="match status" value="1"/>
</dbReference>
<dbReference type="Pfam" id="PF08264">
    <property type="entry name" value="Anticodon_1"/>
    <property type="match status" value="1"/>
</dbReference>
<dbReference type="Pfam" id="PF00133">
    <property type="entry name" value="tRNA-synt_1"/>
    <property type="match status" value="1"/>
</dbReference>
<dbReference type="Pfam" id="PF06827">
    <property type="entry name" value="zf-FPG_IleRS"/>
    <property type="match status" value="1"/>
</dbReference>
<dbReference type="PRINTS" id="PR00984">
    <property type="entry name" value="TRNASYNTHILE"/>
</dbReference>
<dbReference type="SUPFAM" id="SSF47323">
    <property type="entry name" value="Anticodon-binding domain of a subclass of class I aminoacyl-tRNA synthetases"/>
    <property type="match status" value="1"/>
</dbReference>
<dbReference type="SUPFAM" id="SSF52374">
    <property type="entry name" value="Nucleotidylyl transferase"/>
    <property type="match status" value="1"/>
</dbReference>
<dbReference type="SUPFAM" id="SSF50677">
    <property type="entry name" value="ValRS/IleRS/LeuRS editing domain"/>
    <property type="match status" value="1"/>
</dbReference>
<dbReference type="PROSITE" id="PS00178">
    <property type="entry name" value="AA_TRNA_LIGASE_I"/>
    <property type="match status" value="1"/>
</dbReference>
<sequence>MTDYKATLNLPDTAFPMKAGLPQREPQILQRWDSIGLYQKLREIGKDRPKFVLHDGPPYANGKIHIGHALNKILKDMIVRSKTLAGFDAPYVPGWDCHGLPIEHKVEVTHGKHLSADRTRELCREYAAEQIEGQKTEFIRLGVLGDWDNPYKTMNFANEAGEIRALAEMVKQGFVFKGLKPVNWCFDCGSALAEAEVEYADKKSQTIDVAFPVADETKLAAAFGLASLAKPAAIVIWTTTPWTIPANQALNIHPEFKYALVDTGERLLVLAEELVESCLKRYNLEGSIIATAQGSALELINFRHPFYDRLSPIYLADYVELGAGTGVVHSAPAYGEDDFVTCKRYGMVNDDILTPVQSNGVYVESLPFFGGQFIWKANPAIVEKLSEVGALMHTETISHSYMHCWRHKTPLIYRATAQWFVGMDKQPTTGEPLRERALKAIEDTKFVPAWGQARLHSMIANRPDWCISRQRNWGVPIPFFLHKQTGELHPRTVELMEQVAKRVEQEGIEAWFKLDAAELLGVEADQYDKITDTLDVWFDSGTTHWHVLRGSHDIGHTTGPVADLYLEGSDQHRGWFHSSLLTGCAIDNHAPYRELLTHGFTVDENGRKMSKSLGNTIEPEKVNNTLGADILRLWVSATDYSGEMAVSEQILQRSADAYRRIRNTARFLLSNLSGFDPARDLLAPEDMLALDRWAVDRTLLLQRELEEHYSEYRFWNVYSKVHNFCVQELGGFYLDIIKDRQYTTGANSVARRSCQTALYHISEALVRWIAPILAFTADEIWQYLPGERNESVMLNGWYQGLSELPEGTELDRAYWDRVMAVKASVNKELENQRTAKVIGGNLQAEVTLYADEGLSADLGKLGDELRFVLITSAASVVPFAQAPAEAVATEVEGLKLKVVKSGHAKCGRCWHFRADVGSHPEHPEICSRCVDNLSGSGEVRHYA</sequence>
<protein>
    <recommendedName>
        <fullName evidence="1">Isoleucine--tRNA ligase</fullName>
        <ecNumber evidence="1">6.1.1.5</ecNumber>
    </recommendedName>
    <alternativeName>
        <fullName evidence="1">Isoleucyl-tRNA synthetase</fullName>
        <shortName evidence="1">IleRS</shortName>
    </alternativeName>
</protein>
<evidence type="ECO:0000255" key="1">
    <source>
        <dbReference type="HAMAP-Rule" id="MF_02002"/>
    </source>
</evidence>
<gene>
    <name evidence="1" type="primary">ileS</name>
    <name type="ordered locus">PputGB1_0649</name>
</gene>
<keyword id="KW-0030">Aminoacyl-tRNA synthetase</keyword>
<keyword id="KW-0067">ATP-binding</keyword>
<keyword id="KW-0963">Cytoplasm</keyword>
<keyword id="KW-0436">Ligase</keyword>
<keyword id="KW-0479">Metal-binding</keyword>
<keyword id="KW-0547">Nucleotide-binding</keyword>
<keyword id="KW-0648">Protein biosynthesis</keyword>
<keyword id="KW-0862">Zinc</keyword>
<comment type="function">
    <text evidence="1">Catalyzes the attachment of isoleucine to tRNA(Ile). As IleRS can inadvertently accommodate and process structurally similar amino acids such as valine, to avoid such errors it has two additional distinct tRNA(Ile)-dependent editing activities. One activity is designated as 'pretransfer' editing and involves the hydrolysis of activated Val-AMP. The other activity is designated 'posttransfer' editing and involves deacylation of mischarged Val-tRNA(Ile).</text>
</comment>
<comment type="catalytic activity">
    <reaction evidence="1">
        <text>tRNA(Ile) + L-isoleucine + ATP = L-isoleucyl-tRNA(Ile) + AMP + diphosphate</text>
        <dbReference type="Rhea" id="RHEA:11060"/>
        <dbReference type="Rhea" id="RHEA-COMP:9666"/>
        <dbReference type="Rhea" id="RHEA-COMP:9695"/>
        <dbReference type="ChEBI" id="CHEBI:30616"/>
        <dbReference type="ChEBI" id="CHEBI:33019"/>
        <dbReference type="ChEBI" id="CHEBI:58045"/>
        <dbReference type="ChEBI" id="CHEBI:78442"/>
        <dbReference type="ChEBI" id="CHEBI:78528"/>
        <dbReference type="ChEBI" id="CHEBI:456215"/>
        <dbReference type="EC" id="6.1.1.5"/>
    </reaction>
</comment>
<comment type="cofactor">
    <cofactor evidence="1">
        <name>Zn(2+)</name>
        <dbReference type="ChEBI" id="CHEBI:29105"/>
    </cofactor>
    <text evidence="1">Binds 1 zinc ion per subunit.</text>
</comment>
<comment type="subunit">
    <text evidence="1">Monomer.</text>
</comment>
<comment type="subcellular location">
    <subcellularLocation>
        <location evidence="1">Cytoplasm</location>
    </subcellularLocation>
</comment>
<comment type="domain">
    <text evidence="1">IleRS has two distinct active sites: one for aminoacylation and one for editing. The misactivated valine is translocated from the active site to the editing site, which sterically excludes the correctly activated isoleucine. The single editing site contains two valyl binding pockets, one specific for each substrate (Val-AMP or Val-tRNA(Ile)).</text>
</comment>
<comment type="similarity">
    <text evidence="1">Belongs to the class-I aminoacyl-tRNA synthetase family. IleS type 1 subfamily.</text>
</comment>
<accession>B0KM84</accession>
<organism>
    <name type="scientific">Pseudomonas putida (strain GB-1)</name>
    <dbReference type="NCBI Taxonomy" id="76869"/>
    <lineage>
        <taxon>Bacteria</taxon>
        <taxon>Pseudomonadati</taxon>
        <taxon>Pseudomonadota</taxon>
        <taxon>Gammaproteobacteria</taxon>
        <taxon>Pseudomonadales</taxon>
        <taxon>Pseudomonadaceae</taxon>
        <taxon>Pseudomonas</taxon>
    </lineage>
</organism>